<sequence length="707" mass="78473">MTKRLTPQEKLSRKPASRACTFCHQKHLQCSNERPCKNCVKRNIADQCQDITRKRVKYLTGANSKAVAAATTPEATTTTPKRKQKRSVKGSPSISFPSSSISPINTSTFDTNGHPNGHPNDLLRQSLEASQAGQAQAPSLLEIQGPFPQMQTLQPTHTVASETSSSYSQVQPQHHPESSVPPSAPPESVDQLQQLMMHDSAYFNTNNVALNPTNVLEADPFDGHTNTMLNTTTDVLNKLLNDHYEIDNILQPPDDALLVDQQQSSSEATGTSASKAVPMGPSHSNTHFSSNYLNEEYLMLGDILLQSKPTSPSPSNTSASEYNMLSPSYTQNIDFDNIHLSKRKVVQKLKDSRPFISLGFPKDSSLSLDNLNNMAHQTDNLLDNNVSSRGNNNTSNQKLQSAIASKTSKTNPIINFATKYSTEYVSPLSTHQIYQTVSDIYSKDVLNYEYPNSYHALTHFLKTRFSGNNLPHEEKARKRQNLLVILKLIASYRPTFISAHKSLLKPQDLLFLEMSFQRCLIDYEKLSQLNSSPTIIWRRTGEIVSITDDLLSLLGYKLLDILSKRTFIMEIMYDDESIVKYFQLFKSVAVGNLHSSINTKVKLIKNGGAVPGGGTSNGKYNYNNNYNHNYSHNNNNNNNSNNSNNNGMSTGAGNSGDGDGLENNVGTNSYIEFCSVWTVKRDLFDIPMLIIGQFLPILPAGDGVRMY</sequence>
<gene>
    <name type="primary">GSM1</name>
    <name type="ORF">LELG_00882</name>
</gene>
<organism>
    <name type="scientific">Lodderomyces elongisporus (strain ATCC 11503 / CBS 2605 / JCM 1781 / NBRC 1676 / NRRL YB-4239)</name>
    <name type="common">Yeast</name>
    <name type="synonym">Saccharomyces elongisporus</name>
    <dbReference type="NCBI Taxonomy" id="379508"/>
    <lineage>
        <taxon>Eukaryota</taxon>
        <taxon>Fungi</taxon>
        <taxon>Dikarya</taxon>
        <taxon>Ascomycota</taxon>
        <taxon>Saccharomycotina</taxon>
        <taxon>Pichiomycetes</taxon>
        <taxon>Debaryomycetaceae</taxon>
        <taxon>Candida/Lodderomyces clade</taxon>
        <taxon>Lodderomyces</taxon>
    </lineage>
</organism>
<feature type="chain" id="PRO_0000406487" description="Glucose starvation modulator protein 1">
    <location>
        <begin position="1"/>
        <end position="707"/>
    </location>
</feature>
<feature type="domain" description="PAS">
    <location>
        <begin position="522"/>
        <end position="591"/>
    </location>
</feature>
<feature type="DNA-binding region" description="Zn(2)-C6 fungal-type" evidence="2">
    <location>
        <begin position="20"/>
        <end position="48"/>
    </location>
</feature>
<feature type="region of interest" description="Disordered" evidence="3">
    <location>
        <begin position="63"/>
        <end position="122"/>
    </location>
</feature>
<feature type="region of interest" description="Disordered" evidence="3">
    <location>
        <begin position="154"/>
        <end position="188"/>
    </location>
</feature>
<feature type="region of interest" description="Disordered" evidence="3">
    <location>
        <begin position="260"/>
        <end position="283"/>
    </location>
</feature>
<feature type="region of interest" description="Disordered" evidence="3">
    <location>
        <begin position="385"/>
        <end position="404"/>
    </location>
</feature>
<feature type="region of interest" description="Disordered" evidence="3">
    <location>
        <begin position="621"/>
        <end position="659"/>
    </location>
</feature>
<feature type="compositionally biased region" description="Low complexity" evidence="3">
    <location>
        <begin position="66"/>
        <end position="79"/>
    </location>
</feature>
<feature type="compositionally biased region" description="Low complexity" evidence="3">
    <location>
        <begin position="91"/>
        <end position="104"/>
    </location>
</feature>
<feature type="compositionally biased region" description="Polar residues" evidence="3">
    <location>
        <begin position="105"/>
        <end position="114"/>
    </location>
</feature>
<feature type="compositionally biased region" description="Polar residues" evidence="3">
    <location>
        <begin position="154"/>
        <end position="172"/>
    </location>
</feature>
<feature type="compositionally biased region" description="Low complexity" evidence="3">
    <location>
        <begin position="178"/>
        <end position="188"/>
    </location>
</feature>
<feature type="compositionally biased region" description="Polar residues" evidence="3">
    <location>
        <begin position="260"/>
        <end position="274"/>
    </location>
</feature>
<feature type="compositionally biased region" description="Low complexity" evidence="3">
    <location>
        <begin position="621"/>
        <end position="652"/>
    </location>
</feature>
<protein>
    <recommendedName>
        <fullName>Glucose starvation modulator protein 1</fullName>
    </recommendedName>
</protein>
<keyword id="KW-0238">DNA-binding</keyword>
<keyword id="KW-0479">Metal-binding</keyword>
<keyword id="KW-0539">Nucleus</keyword>
<keyword id="KW-1185">Reference proteome</keyword>
<keyword id="KW-0804">Transcription</keyword>
<keyword id="KW-0805">Transcription regulation</keyword>
<keyword id="KW-0862">Zinc</keyword>
<dbReference type="EMBL" id="CH981524">
    <property type="protein sequence ID" value="EDK42704.1"/>
    <property type="molecule type" value="Genomic_DNA"/>
</dbReference>
<dbReference type="RefSeq" id="XP_001528362.1">
    <property type="nucleotide sequence ID" value="XM_001528312.1"/>
</dbReference>
<dbReference type="FunCoup" id="A5DU46">
    <property type="interactions" value="148"/>
</dbReference>
<dbReference type="GeneID" id="5234865"/>
<dbReference type="KEGG" id="lel:PVL30_000849"/>
<dbReference type="eggNOG" id="ENOG502R2ZP">
    <property type="taxonomic scope" value="Eukaryota"/>
</dbReference>
<dbReference type="HOGENOM" id="CLU_010748_2_2_1"/>
<dbReference type="InParanoid" id="A5DU46"/>
<dbReference type="OMA" id="FCHEKHL"/>
<dbReference type="OrthoDB" id="2538135at2759"/>
<dbReference type="Proteomes" id="UP000001996">
    <property type="component" value="Unassembled WGS sequence"/>
</dbReference>
<dbReference type="GO" id="GO:0005634">
    <property type="term" value="C:nucleus"/>
    <property type="evidence" value="ECO:0007669"/>
    <property type="project" value="UniProtKB-SubCell"/>
</dbReference>
<dbReference type="GO" id="GO:0000981">
    <property type="term" value="F:DNA-binding transcription factor activity, RNA polymerase II-specific"/>
    <property type="evidence" value="ECO:0007669"/>
    <property type="project" value="InterPro"/>
</dbReference>
<dbReference type="GO" id="GO:0000977">
    <property type="term" value="F:RNA polymerase II transcription regulatory region sequence-specific DNA binding"/>
    <property type="evidence" value="ECO:0007669"/>
    <property type="project" value="TreeGrafter"/>
</dbReference>
<dbReference type="GO" id="GO:0008270">
    <property type="term" value="F:zinc ion binding"/>
    <property type="evidence" value="ECO:0007669"/>
    <property type="project" value="InterPro"/>
</dbReference>
<dbReference type="GO" id="GO:0009267">
    <property type="term" value="P:cellular response to starvation"/>
    <property type="evidence" value="ECO:0007669"/>
    <property type="project" value="TreeGrafter"/>
</dbReference>
<dbReference type="CDD" id="cd00067">
    <property type="entry name" value="GAL4"/>
    <property type="match status" value="1"/>
</dbReference>
<dbReference type="Gene3D" id="4.10.240.10">
    <property type="entry name" value="Zn(2)-C6 fungal-type DNA-binding domain"/>
    <property type="match status" value="1"/>
</dbReference>
<dbReference type="InterPro" id="IPR050335">
    <property type="entry name" value="ERT1_acuK_gluconeogen_tf"/>
</dbReference>
<dbReference type="InterPro" id="IPR056751">
    <property type="entry name" value="PAS_13"/>
</dbReference>
<dbReference type="InterPro" id="IPR036864">
    <property type="entry name" value="Zn2-C6_fun-type_DNA-bd_sf"/>
</dbReference>
<dbReference type="InterPro" id="IPR001138">
    <property type="entry name" value="Zn2Cys6_DnaBD"/>
</dbReference>
<dbReference type="PANTHER" id="PTHR47659:SF8">
    <property type="entry name" value="GLUCOSE STARVATION MODULATOR PROTEIN 1"/>
    <property type="match status" value="1"/>
</dbReference>
<dbReference type="PANTHER" id="PTHR47659">
    <property type="entry name" value="ZN(II)2CYS6 TRANSCRIPTION FACTOR (EUROFUNG)-RELATED"/>
    <property type="match status" value="1"/>
</dbReference>
<dbReference type="Pfam" id="PF24990">
    <property type="entry name" value="PAS_13"/>
    <property type="match status" value="1"/>
</dbReference>
<dbReference type="Pfam" id="PF00172">
    <property type="entry name" value="Zn_clus"/>
    <property type="match status" value="1"/>
</dbReference>
<dbReference type="SMART" id="SM00066">
    <property type="entry name" value="GAL4"/>
    <property type="match status" value="1"/>
</dbReference>
<dbReference type="SUPFAM" id="SSF57701">
    <property type="entry name" value="Zn2/Cys6 DNA-binding domain"/>
    <property type="match status" value="1"/>
</dbReference>
<dbReference type="PROSITE" id="PS00463">
    <property type="entry name" value="ZN2_CY6_FUNGAL_1"/>
    <property type="match status" value="1"/>
</dbReference>
<dbReference type="PROSITE" id="PS50048">
    <property type="entry name" value="ZN2_CY6_FUNGAL_2"/>
    <property type="match status" value="1"/>
</dbReference>
<accession>A5DU46</accession>
<reference key="1">
    <citation type="journal article" date="2009" name="Nature">
        <title>Evolution of pathogenicity and sexual reproduction in eight Candida genomes.</title>
        <authorList>
            <person name="Butler G."/>
            <person name="Rasmussen M.D."/>
            <person name="Lin M.F."/>
            <person name="Santos M.A.S."/>
            <person name="Sakthikumar S."/>
            <person name="Munro C.A."/>
            <person name="Rheinbay E."/>
            <person name="Grabherr M."/>
            <person name="Forche A."/>
            <person name="Reedy J.L."/>
            <person name="Agrafioti I."/>
            <person name="Arnaud M.B."/>
            <person name="Bates S."/>
            <person name="Brown A.J.P."/>
            <person name="Brunke S."/>
            <person name="Costanzo M.C."/>
            <person name="Fitzpatrick D.A."/>
            <person name="de Groot P.W.J."/>
            <person name="Harris D."/>
            <person name="Hoyer L.L."/>
            <person name="Hube B."/>
            <person name="Klis F.M."/>
            <person name="Kodira C."/>
            <person name="Lennard N."/>
            <person name="Logue M.E."/>
            <person name="Martin R."/>
            <person name="Neiman A.M."/>
            <person name="Nikolaou E."/>
            <person name="Quail M.A."/>
            <person name="Quinn J."/>
            <person name="Santos M.C."/>
            <person name="Schmitzberger F.F."/>
            <person name="Sherlock G."/>
            <person name="Shah P."/>
            <person name="Silverstein K.A.T."/>
            <person name="Skrzypek M.S."/>
            <person name="Soll D."/>
            <person name="Staggs R."/>
            <person name="Stansfield I."/>
            <person name="Stumpf M.P.H."/>
            <person name="Sudbery P.E."/>
            <person name="Srikantha T."/>
            <person name="Zeng Q."/>
            <person name="Berman J."/>
            <person name="Berriman M."/>
            <person name="Heitman J."/>
            <person name="Gow N.A.R."/>
            <person name="Lorenz M.C."/>
            <person name="Birren B.W."/>
            <person name="Kellis M."/>
            <person name="Cuomo C.A."/>
        </authorList>
    </citation>
    <scope>NUCLEOTIDE SEQUENCE [LARGE SCALE GENOMIC DNA]</scope>
    <source>
        <strain>ATCC 11503 / BCRC 21390 / CBS 2605 / JCM 1781 / NBRC 1676 / NRRL YB-4239</strain>
    </source>
</reference>
<evidence type="ECO:0000250" key="1"/>
<evidence type="ECO:0000255" key="2">
    <source>
        <dbReference type="PROSITE-ProRule" id="PRU00227"/>
    </source>
</evidence>
<evidence type="ECO:0000256" key="3">
    <source>
        <dbReference type="SAM" id="MobiDB-lite"/>
    </source>
</evidence>
<evidence type="ECO:0000305" key="4"/>
<name>GSM1_LODEL</name>
<comment type="function">
    <text evidence="1">Transcription factor which regulates nonfermentable carbon utilization.</text>
</comment>
<comment type="subcellular location">
    <subcellularLocation>
        <location evidence="2">Nucleus</location>
    </subcellularLocation>
</comment>
<comment type="similarity">
    <text evidence="4">Belongs to the ERT1/acuK family.</text>
</comment>
<proteinExistence type="inferred from homology"/>